<evidence type="ECO:0000250" key="1"/>
<evidence type="ECO:0000255" key="2">
    <source>
        <dbReference type="PROSITE-ProRule" id="PRU00333"/>
    </source>
</evidence>
<proteinExistence type="evidence at transcript level"/>
<gene>
    <name type="primary">HMT-4</name>
</gene>
<dbReference type="EC" id="2.1.1.10"/>
<dbReference type="EMBL" id="AF297047">
    <property type="protein sequence ID" value="AAG22540.1"/>
    <property type="molecule type" value="mRNA"/>
</dbReference>
<dbReference type="RefSeq" id="NP_001105014.1">
    <property type="nucleotide sequence ID" value="NM_001111544.1"/>
</dbReference>
<dbReference type="SMR" id="Q9FUM7"/>
<dbReference type="FunCoup" id="Q9FUM7">
    <property type="interactions" value="218"/>
</dbReference>
<dbReference type="STRING" id="4577.Q9FUM7"/>
<dbReference type="PaxDb" id="4577-GRMZM2G039166_P01"/>
<dbReference type="GeneID" id="541876"/>
<dbReference type="KEGG" id="zma:541876"/>
<dbReference type="eggNOG" id="KOG1579">
    <property type="taxonomic scope" value="Eukaryota"/>
</dbReference>
<dbReference type="InParanoid" id="Q9FUM7"/>
<dbReference type="OrthoDB" id="261426at2759"/>
<dbReference type="Proteomes" id="UP000007305">
    <property type="component" value="Unplaced"/>
</dbReference>
<dbReference type="ExpressionAtlas" id="Q9FUM7">
    <property type="expression patterns" value="baseline and differential"/>
</dbReference>
<dbReference type="GO" id="GO:0046872">
    <property type="term" value="F:metal ion binding"/>
    <property type="evidence" value="ECO:0007669"/>
    <property type="project" value="UniProtKB-KW"/>
</dbReference>
<dbReference type="GO" id="GO:0061627">
    <property type="term" value="F:S-methylmethionine-homocysteine S-methyltransferase activity"/>
    <property type="evidence" value="ECO:0007669"/>
    <property type="project" value="RHEA"/>
</dbReference>
<dbReference type="GO" id="GO:0009086">
    <property type="term" value="P:methionine biosynthetic process"/>
    <property type="evidence" value="ECO:0007669"/>
    <property type="project" value="UniProtKB-KW"/>
</dbReference>
<dbReference type="GO" id="GO:0032259">
    <property type="term" value="P:methylation"/>
    <property type="evidence" value="ECO:0007669"/>
    <property type="project" value="UniProtKB-KW"/>
</dbReference>
<dbReference type="FunFam" id="3.20.20.330:FF:000002">
    <property type="entry name" value="Homocysteine S-methyltransferase"/>
    <property type="match status" value="1"/>
</dbReference>
<dbReference type="Gene3D" id="3.20.20.330">
    <property type="entry name" value="Homocysteine-binding-like domain"/>
    <property type="match status" value="1"/>
</dbReference>
<dbReference type="InterPro" id="IPR003726">
    <property type="entry name" value="HCY_dom"/>
</dbReference>
<dbReference type="InterPro" id="IPR036589">
    <property type="entry name" value="HCY_dom_sf"/>
</dbReference>
<dbReference type="InterPro" id="IPR051486">
    <property type="entry name" value="Hcy_S-methyltransferase"/>
</dbReference>
<dbReference type="NCBIfam" id="NF007020">
    <property type="entry name" value="PRK09485.1"/>
    <property type="match status" value="1"/>
</dbReference>
<dbReference type="PANTHER" id="PTHR46015:SF10">
    <property type="entry name" value="HOMOCYSTEINE S-METHYLTRANSFERASE 3"/>
    <property type="match status" value="1"/>
</dbReference>
<dbReference type="PANTHER" id="PTHR46015">
    <property type="entry name" value="ZGC:172121"/>
    <property type="match status" value="1"/>
</dbReference>
<dbReference type="Pfam" id="PF02574">
    <property type="entry name" value="S-methyl_trans"/>
    <property type="match status" value="1"/>
</dbReference>
<dbReference type="SUPFAM" id="SSF82282">
    <property type="entry name" value="Homocysteine S-methyltransferase"/>
    <property type="match status" value="1"/>
</dbReference>
<dbReference type="PROSITE" id="PS50970">
    <property type="entry name" value="HCY"/>
    <property type="match status" value="1"/>
</dbReference>
<feature type="chain" id="PRO_0000114617" description="Homocysteine S-methyltransferase 4">
    <location>
        <begin position="1"/>
        <end position="342"/>
    </location>
</feature>
<feature type="domain" description="Hcy-binding" evidence="2">
    <location>
        <begin position="13"/>
        <end position="328"/>
    </location>
</feature>
<feature type="binding site" evidence="2">
    <location>
        <position position="245"/>
    </location>
    <ligand>
        <name>Zn(2+)</name>
        <dbReference type="ChEBI" id="CHEBI:29105"/>
    </ligand>
</feature>
<feature type="binding site" evidence="2">
    <location>
        <position position="313"/>
    </location>
    <ligand>
        <name>Zn(2+)</name>
        <dbReference type="ChEBI" id="CHEBI:29105"/>
    </ligand>
</feature>
<feature type="binding site" evidence="2">
    <location>
        <position position="314"/>
    </location>
    <ligand>
        <name>Zn(2+)</name>
        <dbReference type="ChEBI" id="CHEBI:29105"/>
    </ligand>
</feature>
<protein>
    <recommendedName>
        <fullName>Homocysteine S-methyltransferase 4</fullName>
        <ecNumber>2.1.1.10</ecNumber>
    </recommendedName>
    <alternativeName>
        <fullName>S-methylmethionine:homocysteine methyltransferase 4</fullName>
        <shortName>SMM:Hcy S-methyltransferase 4</shortName>
    </alternativeName>
    <alternativeName>
        <fullName>ZmHMT-4</fullName>
    </alternativeName>
</protein>
<comment type="function">
    <text evidence="1">Catalyzes methyl transfer from S-methylmethionine (SMM) to adenosyl-L-homocysteine (AdoMet). SMM degradation (by HMT-1, HMT-2, HMT-3 and HMT-4) and biosynthesis (by MMT1) constitute the SMM cycle in plants, which is probably required to achieve short term control of AdoMet level (By similarity).</text>
</comment>
<comment type="catalytic activity">
    <reaction>
        <text>S-methyl-L-methionine + L-homocysteine = 2 L-methionine + H(+)</text>
        <dbReference type="Rhea" id="RHEA:26337"/>
        <dbReference type="ChEBI" id="CHEBI:15378"/>
        <dbReference type="ChEBI" id="CHEBI:57844"/>
        <dbReference type="ChEBI" id="CHEBI:58199"/>
        <dbReference type="ChEBI" id="CHEBI:58252"/>
        <dbReference type="EC" id="2.1.1.10"/>
    </reaction>
</comment>
<comment type="cofactor">
    <cofactor evidence="2">
        <name>Zn(2+)</name>
        <dbReference type="ChEBI" id="CHEBI:29105"/>
    </cofactor>
</comment>
<comment type="subunit">
    <text evidence="1">Monomer.</text>
</comment>
<accession>Q9FUM7</accession>
<name>HMT4_MAIZE</name>
<reference key="1">
    <citation type="journal article" date="2001" name="Plant J.">
        <title>The S-methylmethionine cycle in angiosperms: ubiquity, antiquity and activity.</title>
        <authorList>
            <person name="Ranocha P."/>
            <person name="McNeil S.D."/>
            <person name="Ziemak M.J."/>
            <person name="Li C."/>
            <person name="Tarczynski M.C."/>
            <person name="Hanson A.D."/>
        </authorList>
    </citation>
    <scope>NUCLEOTIDE SEQUENCE [MRNA]</scope>
</reference>
<keyword id="KW-0028">Amino-acid biosynthesis</keyword>
<keyword id="KW-0479">Metal-binding</keyword>
<keyword id="KW-0486">Methionine biosynthesis</keyword>
<keyword id="KW-0489">Methyltransferase</keyword>
<keyword id="KW-1185">Reference proteome</keyword>
<keyword id="KW-0949">S-adenosyl-L-methionine</keyword>
<keyword id="KW-0808">Transferase</keyword>
<keyword id="KW-0862">Zinc</keyword>
<sequence length="342" mass="36460">MWFGGGPIDAAGALRGFVREAGGCAVVDGGLGTELEAHGADLHDALWSAKCLASAPHLIRKVHLDYLEAGADVIISASYQATIEGFQSRGFSRDESEELLRRSVHVAQEARRVFAAEGDRSSRRGRPPALVAASVGSYGAYRADGSEYSGDYGKSMTKEDLKNFHRRRLQVLAGAGPDLIAFETIPNKLEAQVYAELLEENGIRIPAWFSFTSKDGVNAASGDPINECAAVADSCPRVDAVGVNCTAPRFIHGLILSIKKVTSKPIVVYPNSGETYVAETNEWVDSDGATGTDDFVSRVGEWRRAGAALIGGCCRTSPATVRAIARAVREAEYDDIPAVAVL</sequence>
<organism>
    <name type="scientific">Zea mays</name>
    <name type="common">Maize</name>
    <dbReference type="NCBI Taxonomy" id="4577"/>
    <lineage>
        <taxon>Eukaryota</taxon>
        <taxon>Viridiplantae</taxon>
        <taxon>Streptophyta</taxon>
        <taxon>Embryophyta</taxon>
        <taxon>Tracheophyta</taxon>
        <taxon>Spermatophyta</taxon>
        <taxon>Magnoliopsida</taxon>
        <taxon>Liliopsida</taxon>
        <taxon>Poales</taxon>
        <taxon>Poaceae</taxon>
        <taxon>PACMAD clade</taxon>
        <taxon>Panicoideae</taxon>
        <taxon>Andropogonodae</taxon>
        <taxon>Andropogoneae</taxon>
        <taxon>Tripsacinae</taxon>
        <taxon>Zea</taxon>
    </lineage>
</organism>